<accession>C0RG44</accession>
<keyword id="KW-0963">Cytoplasm</keyword>
<keyword id="KW-0690">Ribosome biogenesis</keyword>
<feature type="chain" id="PRO_1000149784" description="Ribosome maturation factor RimP">
    <location>
        <begin position="1"/>
        <end position="219"/>
    </location>
</feature>
<feature type="region of interest" description="Disordered" evidence="2">
    <location>
        <begin position="195"/>
        <end position="219"/>
    </location>
</feature>
<organism>
    <name type="scientific">Brucella melitensis biotype 2 (strain ATCC 23457)</name>
    <dbReference type="NCBI Taxonomy" id="546272"/>
    <lineage>
        <taxon>Bacteria</taxon>
        <taxon>Pseudomonadati</taxon>
        <taxon>Pseudomonadota</taxon>
        <taxon>Alphaproteobacteria</taxon>
        <taxon>Hyphomicrobiales</taxon>
        <taxon>Brucellaceae</taxon>
        <taxon>Brucella/Ochrobactrum group</taxon>
        <taxon>Brucella</taxon>
    </lineage>
</organism>
<name>RIMP_BRUMB</name>
<comment type="function">
    <text evidence="1">Required for maturation of 30S ribosomal subunits.</text>
</comment>
<comment type="subcellular location">
    <subcellularLocation>
        <location evidence="1">Cytoplasm</location>
    </subcellularLocation>
</comment>
<comment type="similarity">
    <text evidence="1">Belongs to the RimP family.</text>
</comment>
<proteinExistence type="inferred from homology"/>
<dbReference type="EMBL" id="CP001488">
    <property type="protein sequence ID" value="ACO01866.1"/>
    <property type="molecule type" value="Genomic_DNA"/>
</dbReference>
<dbReference type="RefSeq" id="WP_002965224.1">
    <property type="nucleotide sequence ID" value="NC_012441.1"/>
</dbReference>
<dbReference type="SMR" id="C0RG44"/>
<dbReference type="GeneID" id="97534585"/>
<dbReference type="KEGG" id="bmi:BMEA_A2222"/>
<dbReference type="HOGENOM" id="CLU_070525_0_1_5"/>
<dbReference type="Proteomes" id="UP000001748">
    <property type="component" value="Chromosome I"/>
</dbReference>
<dbReference type="GO" id="GO:0005829">
    <property type="term" value="C:cytosol"/>
    <property type="evidence" value="ECO:0007669"/>
    <property type="project" value="TreeGrafter"/>
</dbReference>
<dbReference type="GO" id="GO:0000028">
    <property type="term" value="P:ribosomal small subunit assembly"/>
    <property type="evidence" value="ECO:0007669"/>
    <property type="project" value="TreeGrafter"/>
</dbReference>
<dbReference type="GO" id="GO:0006412">
    <property type="term" value="P:translation"/>
    <property type="evidence" value="ECO:0007669"/>
    <property type="project" value="TreeGrafter"/>
</dbReference>
<dbReference type="CDD" id="cd01734">
    <property type="entry name" value="YlxS_C"/>
    <property type="match status" value="1"/>
</dbReference>
<dbReference type="Gene3D" id="3.30.300.70">
    <property type="entry name" value="RimP-like superfamily, N-terminal"/>
    <property type="match status" value="1"/>
</dbReference>
<dbReference type="HAMAP" id="MF_01077">
    <property type="entry name" value="RimP"/>
    <property type="match status" value="1"/>
</dbReference>
<dbReference type="InterPro" id="IPR003728">
    <property type="entry name" value="Ribosome_maturation_RimP"/>
</dbReference>
<dbReference type="InterPro" id="IPR028998">
    <property type="entry name" value="RimP_C"/>
</dbReference>
<dbReference type="InterPro" id="IPR036847">
    <property type="entry name" value="RimP_C_sf"/>
</dbReference>
<dbReference type="InterPro" id="IPR028989">
    <property type="entry name" value="RimP_N"/>
</dbReference>
<dbReference type="InterPro" id="IPR035956">
    <property type="entry name" value="RimP_N_sf"/>
</dbReference>
<dbReference type="NCBIfam" id="NF000932">
    <property type="entry name" value="PRK00092.2-5"/>
    <property type="match status" value="1"/>
</dbReference>
<dbReference type="PANTHER" id="PTHR33867">
    <property type="entry name" value="RIBOSOME MATURATION FACTOR RIMP"/>
    <property type="match status" value="1"/>
</dbReference>
<dbReference type="PANTHER" id="PTHR33867:SF1">
    <property type="entry name" value="RIBOSOME MATURATION FACTOR RIMP"/>
    <property type="match status" value="1"/>
</dbReference>
<dbReference type="Pfam" id="PF17384">
    <property type="entry name" value="DUF150_C"/>
    <property type="match status" value="1"/>
</dbReference>
<dbReference type="Pfam" id="PF02576">
    <property type="entry name" value="RimP_N"/>
    <property type="match status" value="1"/>
</dbReference>
<dbReference type="SUPFAM" id="SSF74942">
    <property type="entry name" value="YhbC-like, C-terminal domain"/>
    <property type="match status" value="1"/>
</dbReference>
<dbReference type="SUPFAM" id="SSF75420">
    <property type="entry name" value="YhbC-like, N-terminal domain"/>
    <property type="match status" value="1"/>
</dbReference>
<sequence length="219" mass="24039">MTEQVQANETETPVAVADERIIRETGIDAKVAGIVEPVINTLGFRLVRVRLSGLNGQTLQIMAERPDGTMTVDDCELVSRTVAPVLDVEDPISGKYHLEISSPGIDRPLVRKSDFSDWAGHIAKVETSIVHEGRKKFRGRIVVGEADSVTIESDQISYGNEPVVRIPFDLISDARLVLTDDLIRDALRKDKALREGRIPGDDLGAEPEDAASTETQEKK</sequence>
<reference key="1">
    <citation type="submission" date="2009-03" db="EMBL/GenBank/DDBJ databases">
        <title>Brucella melitensis ATCC 23457 whole genome shotgun sequencing project.</title>
        <authorList>
            <person name="Setubal J.C."/>
            <person name="Boyle S."/>
            <person name="Crasta O.R."/>
            <person name="Gillespie J.J."/>
            <person name="Kenyon R.W."/>
            <person name="Lu J."/>
            <person name="Mane S."/>
            <person name="Nagrani S."/>
            <person name="Shallom J.M."/>
            <person name="Shallom S."/>
            <person name="Shukla M."/>
            <person name="Snyder E.E."/>
            <person name="Sobral B.W."/>
            <person name="Wattam A.R."/>
            <person name="Will R."/>
            <person name="Williams K."/>
            <person name="Yoo H."/>
            <person name="Munk C."/>
            <person name="Tapia R."/>
            <person name="Han C."/>
            <person name="Detter J.C."/>
            <person name="Bruce D."/>
            <person name="Brettin T.S."/>
        </authorList>
    </citation>
    <scope>NUCLEOTIDE SEQUENCE [LARGE SCALE GENOMIC DNA]</scope>
    <source>
        <strain>ATCC 23457</strain>
    </source>
</reference>
<evidence type="ECO:0000255" key="1">
    <source>
        <dbReference type="HAMAP-Rule" id="MF_01077"/>
    </source>
</evidence>
<evidence type="ECO:0000256" key="2">
    <source>
        <dbReference type="SAM" id="MobiDB-lite"/>
    </source>
</evidence>
<protein>
    <recommendedName>
        <fullName evidence="1">Ribosome maturation factor RimP</fullName>
    </recommendedName>
</protein>
<gene>
    <name evidence="1" type="primary">rimP</name>
    <name type="ordered locus">BMEA_A2222</name>
</gene>